<proteinExistence type="evidence at protein level"/>
<keyword id="KW-0067">ATP-binding</keyword>
<keyword id="KW-0436">Ligase</keyword>
<keyword id="KW-0460">Magnesium</keyword>
<keyword id="KW-0547">Nucleotide-binding</keyword>
<keyword id="KW-0587">Phenylpropanoid metabolism</keyword>
<keyword id="KW-1185">Reference proteome</keyword>
<protein>
    <recommendedName>
        <fullName evidence="5">4-coumarate--CoA ligase 1</fullName>
        <shortName evidence="5">4CL 1</shortName>
        <shortName evidence="5">Os4CL1</shortName>
        <ecNumber evidence="3 4">6.2.1.12</ecNumber>
    </recommendedName>
    <alternativeName>
        <fullName evidence="6">(E)-ferulate--CoA ligase</fullName>
        <ecNumber evidence="3 4">6.2.1.34</ecNumber>
    </alternativeName>
    <alternativeName>
        <fullName evidence="6">4-coumaroyl-CoA synthase 1</fullName>
    </alternativeName>
</protein>
<evidence type="ECO:0000250" key="1">
    <source>
        <dbReference type="UniProtKB" id="O24146"/>
    </source>
</evidence>
<evidence type="ECO:0000250" key="2">
    <source>
        <dbReference type="UniProtKB" id="Q42524"/>
    </source>
</evidence>
<evidence type="ECO:0000269" key="3">
    <source>
    </source>
</evidence>
<evidence type="ECO:0000269" key="4">
    <source>
    </source>
</evidence>
<evidence type="ECO:0000303" key="5">
    <source>
    </source>
</evidence>
<evidence type="ECO:0000305" key="6"/>
<evidence type="ECO:0000305" key="7">
    <source>
    </source>
</evidence>
<evidence type="ECO:0000305" key="8">
    <source>
    </source>
</evidence>
<evidence type="ECO:0000312" key="9">
    <source>
        <dbReference type="EMBL" id="BAD05189.1"/>
    </source>
</evidence>
<evidence type="ECO:0000312" key="10">
    <source>
        <dbReference type="EMBL" id="BAT04523.1"/>
    </source>
</evidence>
<comment type="function">
    <text evidence="1 3 4">Involved in the phenylpropanoid metabolism by mediating the activation of a number of hydroxycinnamates for the biosynthesis of monolignols and other phenolic secondary metabolites (PubMed:21807887, PubMed:23246835). Catalyzes the formation of CoA esters of cinnamate, 4-coumarate, caffeate and ferulate (PubMed:21807887, PubMed:23246835). Is more efficient with substrates in the following order: ferulate &gt; 4-coumarate &gt; cinnamate &gt; caffeate (PubMed:21807887). Cannot convert sinapate to its corresponding CoA ester (PubMed:21807887, PubMed:23246835). Follows a two-step reaction mechanism, wherein the carboxylate substrate first undergoes adenylation by ATP, followed by a thioesterification in the presence of CoA to yield the final CoA thioester (By similarity).</text>
</comment>
<comment type="catalytic activity">
    <reaction evidence="3 4">
        <text>(E)-ferulate + ATP + CoA = (E)-feruloyl-CoA + AMP + diphosphate</text>
        <dbReference type="Rhea" id="RHEA:36251"/>
        <dbReference type="ChEBI" id="CHEBI:29749"/>
        <dbReference type="ChEBI" id="CHEBI:30616"/>
        <dbReference type="ChEBI" id="CHEBI:33019"/>
        <dbReference type="ChEBI" id="CHEBI:57287"/>
        <dbReference type="ChEBI" id="CHEBI:87305"/>
        <dbReference type="ChEBI" id="CHEBI:456215"/>
        <dbReference type="EC" id="6.2.1.34"/>
    </reaction>
    <physiologicalReaction direction="left-to-right" evidence="3 4">
        <dbReference type="Rhea" id="RHEA:36252"/>
    </physiologicalReaction>
</comment>
<comment type="catalytic activity">
    <reaction evidence="3 4">
        <text>(E)-4-coumarate + ATP + CoA = (E)-4-coumaroyl-CoA + AMP + diphosphate</text>
        <dbReference type="Rhea" id="RHEA:19641"/>
        <dbReference type="ChEBI" id="CHEBI:12876"/>
        <dbReference type="ChEBI" id="CHEBI:30616"/>
        <dbReference type="ChEBI" id="CHEBI:33019"/>
        <dbReference type="ChEBI" id="CHEBI:57287"/>
        <dbReference type="ChEBI" id="CHEBI:85008"/>
        <dbReference type="ChEBI" id="CHEBI:456215"/>
        <dbReference type="EC" id="6.2.1.12"/>
    </reaction>
    <physiologicalReaction direction="left-to-right" evidence="3 4">
        <dbReference type="Rhea" id="RHEA:19642"/>
    </physiologicalReaction>
</comment>
<comment type="catalytic activity">
    <reaction evidence="3 4">
        <text>(E)-cinnamate + ATP + CoA = (E)-cinnamoyl-CoA + AMP + diphosphate</text>
        <dbReference type="Rhea" id="RHEA:64788"/>
        <dbReference type="ChEBI" id="CHEBI:15669"/>
        <dbReference type="ChEBI" id="CHEBI:30616"/>
        <dbReference type="ChEBI" id="CHEBI:33019"/>
        <dbReference type="ChEBI" id="CHEBI:57252"/>
        <dbReference type="ChEBI" id="CHEBI:57287"/>
        <dbReference type="ChEBI" id="CHEBI:456215"/>
    </reaction>
    <physiologicalReaction direction="left-to-right" evidence="3 4">
        <dbReference type="Rhea" id="RHEA:64789"/>
    </physiologicalReaction>
</comment>
<comment type="catalytic activity">
    <reaction evidence="3 4">
        <text>(E)-caffeate + ATP + CoA = (E)-caffeoyl-CoA + AMP + diphosphate</text>
        <dbReference type="Rhea" id="RHEA:36299"/>
        <dbReference type="ChEBI" id="CHEBI:30616"/>
        <dbReference type="ChEBI" id="CHEBI:33019"/>
        <dbReference type="ChEBI" id="CHEBI:57287"/>
        <dbReference type="ChEBI" id="CHEBI:57770"/>
        <dbReference type="ChEBI" id="CHEBI:87136"/>
        <dbReference type="ChEBI" id="CHEBI:456215"/>
    </reaction>
    <physiologicalReaction direction="left-to-right" evidence="3 4">
        <dbReference type="Rhea" id="RHEA:36300"/>
    </physiologicalReaction>
</comment>
<comment type="catalytic activity">
    <reaction evidence="7 8">
        <text>(E)-ferulate + ATP + H(+) = (E)-feruloyl-AMP + diphosphate</text>
        <dbReference type="Rhea" id="RHEA:72439"/>
        <dbReference type="ChEBI" id="CHEBI:15378"/>
        <dbReference type="ChEBI" id="CHEBI:29749"/>
        <dbReference type="ChEBI" id="CHEBI:30616"/>
        <dbReference type="ChEBI" id="CHEBI:33019"/>
        <dbReference type="ChEBI" id="CHEBI:192350"/>
    </reaction>
    <physiologicalReaction direction="left-to-right" evidence="7 8">
        <dbReference type="Rhea" id="RHEA:72440"/>
    </physiologicalReaction>
</comment>
<comment type="catalytic activity">
    <reaction evidence="7 8">
        <text>(E)-feruloyl-AMP + CoA = (E)-feruloyl-CoA + AMP + H(+)</text>
        <dbReference type="Rhea" id="RHEA:72443"/>
        <dbReference type="ChEBI" id="CHEBI:15378"/>
        <dbReference type="ChEBI" id="CHEBI:57287"/>
        <dbReference type="ChEBI" id="CHEBI:87305"/>
        <dbReference type="ChEBI" id="CHEBI:192350"/>
        <dbReference type="ChEBI" id="CHEBI:456215"/>
    </reaction>
    <physiologicalReaction direction="left-to-right" evidence="7 8">
        <dbReference type="Rhea" id="RHEA:72444"/>
    </physiologicalReaction>
</comment>
<comment type="catalytic activity">
    <reaction evidence="7 8">
        <text>(E)-4-coumarate + ATP + H(+) = (E)-4-coumaroyl-AMP + diphosphate</text>
        <dbReference type="Rhea" id="RHEA:72419"/>
        <dbReference type="ChEBI" id="CHEBI:12876"/>
        <dbReference type="ChEBI" id="CHEBI:15378"/>
        <dbReference type="ChEBI" id="CHEBI:30616"/>
        <dbReference type="ChEBI" id="CHEBI:33019"/>
        <dbReference type="ChEBI" id="CHEBI:192348"/>
    </reaction>
    <physiologicalReaction direction="left-to-right" evidence="7 8">
        <dbReference type="Rhea" id="RHEA:72420"/>
    </physiologicalReaction>
</comment>
<comment type="catalytic activity">
    <reaction evidence="7 8">
        <text>(E)-4-coumaroyl-AMP + CoA = (E)-4-coumaroyl-CoA + AMP + H(+)</text>
        <dbReference type="Rhea" id="RHEA:72423"/>
        <dbReference type="ChEBI" id="CHEBI:15378"/>
        <dbReference type="ChEBI" id="CHEBI:57287"/>
        <dbReference type="ChEBI" id="CHEBI:85008"/>
        <dbReference type="ChEBI" id="CHEBI:192348"/>
        <dbReference type="ChEBI" id="CHEBI:456215"/>
    </reaction>
    <physiologicalReaction direction="left-to-right" evidence="7 8">
        <dbReference type="Rhea" id="RHEA:72424"/>
    </physiologicalReaction>
</comment>
<comment type="catalytic activity">
    <reaction evidence="7 8">
        <text>(E)-caffeate + ATP + H(+) = (E)-caffeoyl-AMP + diphosphate</text>
        <dbReference type="Rhea" id="RHEA:72431"/>
        <dbReference type="ChEBI" id="CHEBI:15378"/>
        <dbReference type="ChEBI" id="CHEBI:30616"/>
        <dbReference type="ChEBI" id="CHEBI:33019"/>
        <dbReference type="ChEBI" id="CHEBI:57770"/>
        <dbReference type="ChEBI" id="CHEBI:192349"/>
    </reaction>
    <physiologicalReaction direction="left-to-right" evidence="7 8">
        <dbReference type="Rhea" id="RHEA:72432"/>
    </physiologicalReaction>
</comment>
<comment type="catalytic activity">
    <reaction evidence="7 8">
        <text>(E)-caffeoyl-AMP + CoA = (E)-caffeoyl-CoA + AMP + H(+)</text>
        <dbReference type="Rhea" id="RHEA:72435"/>
        <dbReference type="ChEBI" id="CHEBI:15378"/>
        <dbReference type="ChEBI" id="CHEBI:57287"/>
        <dbReference type="ChEBI" id="CHEBI:87136"/>
        <dbReference type="ChEBI" id="CHEBI:192349"/>
        <dbReference type="ChEBI" id="CHEBI:456215"/>
    </reaction>
    <physiologicalReaction direction="left-to-right" evidence="7 8">
        <dbReference type="Rhea" id="RHEA:72436"/>
    </physiologicalReaction>
</comment>
<comment type="cofactor">
    <cofactor evidence="1">
        <name>Mg(2+)</name>
        <dbReference type="ChEBI" id="CHEBI:18420"/>
    </cofactor>
</comment>
<comment type="biophysicochemical properties">
    <kinetics>
        <KM evidence="3">9.4 uM for cinnamate</KM>
        <KM evidence="3">11.9 uM for 4-coumarate</KM>
        <KM evidence="3">29.3 uM for caffeate</KM>
        <KM evidence="3">8.3 uM for ferulate</KM>
        <Vmax evidence="3">100.0 pmol/sec/mg enzyme with cinnamate as substrate</Vmax>
        <Vmax evidence="3">130.0 pmol/sec/mg enzyme with 4-coumarate as substrate</Vmax>
        <Vmax evidence="3">140.0 pmol/sec/mg enzyme with caffeate as substrate</Vmax>
        <Vmax evidence="3">110.0 pmol/sec/mg enzyme with ferulate as substrate</Vmax>
        <text evidence="3">kcat is 0.37 min(-1) with cinnamate as substrate (PubMed:21807887). kcat is 0.49 min(-1) with 4-coumarate as substrate (PubMed:21807887). kcat is 0.52 min(-1) with caffeate as substrate (PubMed:21807887). kcat is 0.41 min(-1) with ferulate as substrate (PubMed:21807887).</text>
    </kinetics>
</comment>
<comment type="pathway">
    <text evidence="6">Phytoalexin biosynthesis; 3,4',5-trihydroxystilbene biosynthesis; 3,4',5-trihydroxystilbene from trans-4-coumarate: step 1/2.</text>
</comment>
<comment type="tissue specificity">
    <text evidence="3">Expressed in roots, stems, leaf blades and leaf sheaths.</text>
</comment>
<comment type="induction">
    <text evidence="4">Induced by fungal elicitor and UV irradiation. Down-regulated by wounding and UV irradiation (PubMed:23246835).</text>
</comment>
<comment type="domain">
    <text evidence="2">Both substrate-binding domains (SBD1 and SBD2) are involved in the substrate recognition, and are sufficient to confer the substrate specificity.</text>
</comment>
<comment type="similarity">
    <text evidence="6">Belongs to the ATP-dependent AMP-binding enzyme family.</text>
</comment>
<comment type="sequence caution" evidence="6">
    <conflict type="erroneous initiation">
        <sequence resource="EMBL-CDS" id="BAD05189"/>
    </conflict>
    <text>Truncated N-terminus.</text>
</comment>
<comment type="sequence caution" evidence="6">
    <conflict type="erroneous gene model prediction">
        <sequence resource="EMBL-CDS" id="CAA36850"/>
    </conflict>
</comment>
<comment type="sequence caution" evidence="6">
    <conflict type="frameshift">
        <sequence resource="EMBL-CDS" id="CAA36850"/>
    </conflict>
</comment>
<dbReference type="EC" id="6.2.1.12" evidence="3 4"/>
<dbReference type="EC" id="6.2.1.34" evidence="3 4"/>
<dbReference type="EMBL" id="X52623">
    <property type="protein sequence ID" value="CAA36850.1"/>
    <property type="status" value="ALT_SEQ"/>
    <property type="molecule type" value="Genomic_DNA"/>
</dbReference>
<dbReference type="EMBL" id="AP003859">
    <property type="protein sequence ID" value="BAD05189.1"/>
    <property type="status" value="ALT_INIT"/>
    <property type="molecule type" value="Genomic_DNA"/>
</dbReference>
<dbReference type="EMBL" id="AP008214">
    <property type="protein sequence ID" value="BAF23267.1"/>
    <property type="molecule type" value="Genomic_DNA"/>
</dbReference>
<dbReference type="EMBL" id="AP014964">
    <property type="protein sequence ID" value="BAT04523.1"/>
    <property type="molecule type" value="Genomic_DNA"/>
</dbReference>
<dbReference type="EMBL" id="AK069932">
    <property type="protein sequence ID" value="BAG91685.1"/>
    <property type="molecule type" value="mRNA"/>
</dbReference>
<dbReference type="PIR" id="JU0311">
    <property type="entry name" value="JU0311"/>
</dbReference>
<dbReference type="RefSeq" id="XP_015650724.1">
    <property type="nucleotide sequence ID" value="XM_015795238.1"/>
</dbReference>
<dbReference type="SMR" id="P17814"/>
<dbReference type="FunCoup" id="P17814">
    <property type="interactions" value="1518"/>
</dbReference>
<dbReference type="STRING" id="39947.P17814"/>
<dbReference type="PaxDb" id="39947-P17814"/>
<dbReference type="EnsemblPlants" id="Os08t0245200-01">
    <property type="protein sequence ID" value="Os08t0245200-01"/>
    <property type="gene ID" value="Os08g0245200"/>
</dbReference>
<dbReference type="Gramene" id="Os08t0245200-01">
    <property type="protein sequence ID" value="Os08t0245200-01"/>
    <property type="gene ID" value="Os08g0245200"/>
</dbReference>
<dbReference type="KEGG" id="dosa:Os08g0245200"/>
<dbReference type="eggNOG" id="KOG1176">
    <property type="taxonomic scope" value="Eukaryota"/>
</dbReference>
<dbReference type="HOGENOM" id="CLU_000022_59_2_1"/>
<dbReference type="InParanoid" id="P17814"/>
<dbReference type="OMA" id="ERIMAWC"/>
<dbReference type="OrthoDB" id="1898221at2759"/>
<dbReference type="BRENDA" id="6.2.1.12">
    <property type="organism ID" value="4460"/>
</dbReference>
<dbReference type="PlantReactome" id="R-OSA-1119316">
    <property type="pathway name" value="Phenylpropanoid biosynthesis"/>
</dbReference>
<dbReference type="PlantReactome" id="R-OSA-1119418">
    <property type="pathway name" value="Suberin biosynthesis"/>
</dbReference>
<dbReference type="PlantReactome" id="R-OSA-1119531">
    <property type="pathway name" value="Flavonoid biosynthesis"/>
</dbReference>
<dbReference type="UniPathway" id="UPA00372">
    <property type="reaction ID" value="UER00547"/>
</dbReference>
<dbReference type="Proteomes" id="UP000000763">
    <property type="component" value="Chromosome 8"/>
</dbReference>
<dbReference type="Proteomes" id="UP000059680">
    <property type="component" value="Chromosome 8"/>
</dbReference>
<dbReference type="GO" id="GO:0106286">
    <property type="term" value="F:(E)-caffeate-CoA ligase activity"/>
    <property type="evidence" value="ECO:0007669"/>
    <property type="project" value="RHEA"/>
</dbReference>
<dbReference type="GO" id="GO:0016207">
    <property type="term" value="F:4-coumarate-CoA ligase activity"/>
    <property type="evidence" value="ECO:0000314"/>
    <property type="project" value="UniProtKB"/>
</dbReference>
<dbReference type="GO" id="GO:0005524">
    <property type="term" value="F:ATP binding"/>
    <property type="evidence" value="ECO:0007669"/>
    <property type="project" value="UniProtKB-KW"/>
</dbReference>
<dbReference type="GO" id="GO:0016405">
    <property type="term" value="F:CoA-ligase activity"/>
    <property type="evidence" value="ECO:0000318"/>
    <property type="project" value="GO_Central"/>
</dbReference>
<dbReference type="GO" id="GO:0106290">
    <property type="term" value="F:trans-cinnamate-CoA ligase activity"/>
    <property type="evidence" value="ECO:0000314"/>
    <property type="project" value="UniProtKB"/>
</dbReference>
<dbReference type="GO" id="GO:0050563">
    <property type="term" value="F:trans-feruloyl-CoA synthase activity"/>
    <property type="evidence" value="ECO:0007669"/>
    <property type="project" value="RHEA"/>
</dbReference>
<dbReference type="GO" id="GO:0009698">
    <property type="term" value="P:phenylpropanoid metabolic process"/>
    <property type="evidence" value="ECO:0000314"/>
    <property type="project" value="UniProtKB"/>
</dbReference>
<dbReference type="CDD" id="cd05904">
    <property type="entry name" value="4CL"/>
    <property type="match status" value="1"/>
</dbReference>
<dbReference type="FunFam" id="3.30.300.30:FF:000007">
    <property type="entry name" value="4-coumarate--CoA ligase 2"/>
    <property type="match status" value="1"/>
</dbReference>
<dbReference type="FunFam" id="3.40.50.12780:FF:000003">
    <property type="entry name" value="Long-chain-fatty-acid--CoA ligase FadD"/>
    <property type="match status" value="1"/>
</dbReference>
<dbReference type="Gene3D" id="3.30.300.30">
    <property type="match status" value="1"/>
</dbReference>
<dbReference type="Gene3D" id="3.40.50.12780">
    <property type="entry name" value="N-terminal domain of ligase-like"/>
    <property type="match status" value="1"/>
</dbReference>
<dbReference type="InterPro" id="IPR025110">
    <property type="entry name" value="AMP-bd_C"/>
</dbReference>
<dbReference type="InterPro" id="IPR045851">
    <property type="entry name" value="AMP-bd_C_sf"/>
</dbReference>
<dbReference type="InterPro" id="IPR020845">
    <property type="entry name" value="AMP-binding_CS"/>
</dbReference>
<dbReference type="InterPro" id="IPR000873">
    <property type="entry name" value="AMP-dep_synth/lig_dom"/>
</dbReference>
<dbReference type="InterPro" id="IPR042099">
    <property type="entry name" value="ANL_N_sf"/>
</dbReference>
<dbReference type="PANTHER" id="PTHR24096:SF217">
    <property type="entry name" value="4-COUMARATE--COA LIGASE 1"/>
    <property type="match status" value="1"/>
</dbReference>
<dbReference type="PANTHER" id="PTHR24096">
    <property type="entry name" value="LONG-CHAIN-FATTY-ACID--COA LIGASE"/>
    <property type="match status" value="1"/>
</dbReference>
<dbReference type="Pfam" id="PF00501">
    <property type="entry name" value="AMP-binding"/>
    <property type="match status" value="1"/>
</dbReference>
<dbReference type="Pfam" id="PF13193">
    <property type="entry name" value="AMP-binding_C"/>
    <property type="match status" value="1"/>
</dbReference>
<dbReference type="SUPFAM" id="SSF56801">
    <property type="entry name" value="Acetyl-CoA synthetase-like"/>
    <property type="match status" value="1"/>
</dbReference>
<dbReference type="PROSITE" id="PS00455">
    <property type="entry name" value="AMP_BINDING"/>
    <property type="match status" value="1"/>
</dbReference>
<accession>P17814</accession>
<accession>B7EH38</accession>
<accession>Q0J6Z8</accession>
<accession>Q6ZKV9</accession>
<organism>
    <name type="scientific">Oryza sativa subsp. japonica</name>
    <name type="common">Rice</name>
    <dbReference type="NCBI Taxonomy" id="39947"/>
    <lineage>
        <taxon>Eukaryota</taxon>
        <taxon>Viridiplantae</taxon>
        <taxon>Streptophyta</taxon>
        <taxon>Embryophyta</taxon>
        <taxon>Tracheophyta</taxon>
        <taxon>Spermatophyta</taxon>
        <taxon>Magnoliopsida</taxon>
        <taxon>Liliopsida</taxon>
        <taxon>Poales</taxon>
        <taxon>Poaceae</taxon>
        <taxon>BOP clade</taxon>
        <taxon>Oryzoideae</taxon>
        <taxon>Oryzeae</taxon>
        <taxon>Oryzinae</taxon>
        <taxon>Oryza</taxon>
        <taxon>Oryza sativa</taxon>
    </lineage>
</organism>
<gene>
    <name evidence="5" type="primary">4CL1</name>
    <name evidence="6" type="synonym">4CL</name>
    <name evidence="10" type="ordered locus">Os08g0245200</name>
    <name evidence="6" type="ordered locus">LOC_Os08g14760</name>
    <name evidence="9" type="ORF">OJ1033_B09.16</name>
</gene>
<name>4CL1_ORYSJ</name>
<reference key="1">
    <citation type="journal article" date="1990" name="Nucleic Acids Res.">
        <title>Nucleotide sequence of rice 4-coumarate:CoA ligase gene, 4-CL.1.</title>
        <authorList>
            <person name="Zhao Y."/>
            <person name="Kung S.D."/>
            <person name="Dube S.K."/>
        </authorList>
    </citation>
    <scope>NUCLEOTIDE SEQUENCE [GENOMIC DNA]</scope>
</reference>
<reference key="2">
    <citation type="journal article" date="2005" name="Nature">
        <title>The map-based sequence of the rice genome.</title>
        <authorList>
            <consortium name="International rice genome sequencing project (IRGSP)"/>
        </authorList>
    </citation>
    <scope>NUCLEOTIDE SEQUENCE [LARGE SCALE GENOMIC DNA]</scope>
    <source>
        <strain>cv. Nipponbare</strain>
    </source>
</reference>
<reference key="3">
    <citation type="journal article" date="2008" name="Nucleic Acids Res.">
        <title>The rice annotation project database (RAP-DB): 2008 update.</title>
        <authorList>
            <consortium name="The rice annotation project (RAP)"/>
        </authorList>
    </citation>
    <scope>GENOME REANNOTATION</scope>
    <source>
        <strain>cv. Nipponbare</strain>
    </source>
</reference>
<reference key="4">
    <citation type="journal article" date="2013" name="Rice">
        <title>Improvement of the Oryza sativa Nipponbare reference genome using next generation sequence and optical map data.</title>
        <authorList>
            <person name="Kawahara Y."/>
            <person name="de la Bastide M."/>
            <person name="Hamilton J.P."/>
            <person name="Kanamori H."/>
            <person name="McCombie W.R."/>
            <person name="Ouyang S."/>
            <person name="Schwartz D.C."/>
            <person name="Tanaka T."/>
            <person name="Wu J."/>
            <person name="Zhou S."/>
            <person name="Childs K.L."/>
            <person name="Davidson R.M."/>
            <person name="Lin H."/>
            <person name="Quesada-Ocampo L."/>
            <person name="Vaillancourt B."/>
            <person name="Sakai H."/>
            <person name="Lee S.S."/>
            <person name="Kim J."/>
            <person name="Numa H."/>
            <person name="Itoh T."/>
            <person name="Buell C.R."/>
            <person name="Matsumoto T."/>
        </authorList>
    </citation>
    <scope>GENOME REANNOTATION</scope>
    <source>
        <strain>cv. Nipponbare</strain>
    </source>
</reference>
<reference key="5">
    <citation type="journal article" date="2003" name="Science">
        <title>Collection, mapping, and annotation of over 28,000 cDNA clones from japonica rice.</title>
        <authorList>
            <consortium name="The rice full-length cDNA consortium"/>
        </authorList>
    </citation>
    <scope>NUCLEOTIDE SEQUENCE [LARGE SCALE MRNA]</scope>
    <source>
        <strain>cv. Nipponbare</strain>
    </source>
</reference>
<reference key="6">
    <citation type="journal article" date="2008" name="New Phytol.">
        <title>Genome-wide analysis of a land plant-specific acyl:coenzyme A synthetase (ACS) gene family in Arabidopsis, poplar, rice and Physcomitrella.</title>
        <authorList>
            <person name="de Azevedo Souza C."/>
            <person name="Barbazuk B."/>
            <person name="Ralph S.G."/>
            <person name="Bohlmann J."/>
            <person name="Hamberger B."/>
            <person name="Douglas C.J."/>
        </authorList>
    </citation>
    <scope>GENE FAMILY</scope>
</reference>
<reference key="7">
    <citation type="journal article" date="2011" name="Plant Physiol.">
        <title>Functional characterization of evolutionarily divergent 4-coumarate:coenzyme a ligases in rice.</title>
        <authorList>
            <person name="Gui J."/>
            <person name="Shen J."/>
            <person name="Li L."/>
        </authorList>
    </citation>
    <scope>FUNCTION</scope>
    <scope>CATALYTIC ACTIVITY</scope>
    <scope>BIOPHYSICOCHEMICAL PROPERTIES</scope>
    <scope>TISSUE SPECIFICITY</scope>
</reference>
<reference key="8">
    <citation type="journal article" date="2013" name="Biochem. Biophys. Res. Commun.">
        <title>Analysis of five rice 4-coumarate:coenzyme A ligase enzyme activity and stress response for potential roles in lignin and flavonoid biosynthesis in rice.</title>
        <authorList>
            <person name="Sun H."/>
            <person name="Li Y."/>
            <person name="Feng S."/>
            <person name="Zou W."/>
            <person name="Guo K."/>
            <person name="Fan C."/>
            <person name="Si S."/>
            <person name="Peng L."/>
        </authorList>
    </citation>
    <scope>FUNCTION</scope>
    <scope>CATALYTIC ACTIVITY</scope>
    <scope>INDUCTION</scope>
</reference>
<feature type="chain" id="PRO_0000193031" description="4-coumarate--CoA ligase 1">
    <location>
        <begin position="1"/>
        <end position="564"/>
    </location>
</feature>
<feature type="region of interest" description="SBD1" evidence="2">
    <location>
        <begin position="282"/>
        <end position="351"/>
    </location>
</feature>
<feature type="region of interest" description="SBD2" evidence="2">
    <location>
        <begin position="352"/>
        <end position="419"/>
    </location>
</feature>
<feature type="binding site" evidence="1">
    <location>
        <position position="209"/>
    </location>
    <ligand>
        <name>ATP</name>
        <dbReference type="ChEBI" id="CHEBI:30616"/>
    </ligand>
</feature>
<feature type="binding site" evidence="1">
    <location>
        <position position="210"/>
    </location>
    <ligand>
        <name>ATP</name>
        <dbReference type="ChEBI" id="CHEBI:30616"/>
    </ligand>
</feature>
<feature type="binding site" evidence="1">
    <location>
        <position position="211"/>
    </location>
    <ligand>
        <name>ATP</name>
        <dbReference type="ChEBI" id="CHEBI:30616"/>
    </ligand>
</feature>
<feature type="binding site" evidence="1">
    <location>
        <position position="212"/>
    </location>
    <ligand>
        <name>ATP</name>
        <dbReference type="ChEBI" id="CHEBI:30616"/>
    </ligand>
</feature>
<feature type="binding site" evidence="1">
    <location>
        <position position="213"/>
    </location>
    <ligand>
        <name>ATP</name>
        <dbReference type="ChEBI" id="CHEBI:30616"/>
    </ligand>
</feature>
<feature type="binding site" evidence="1">
    <location>
        <position position="217"/>
    </location>
    <ligand>
        <name>ATP</name>
        <dbReference type="ChEBI" id="CHEBI:30616"/>
    </ligand>
</feature>
<feature type="binding site" evidence="1">
    <location>
        <position position="259"/>
    </location>
    <ligand>
        <name>(E)-4-coumaroyl-AMP</name>
        <dbReference type="ChEBI" id="CHEBI:192348"/>
    </ligand>
</feature>
<feature type="binding site" evidence="1">
    <location>
        <position position="263"/>
    </location>
    <ligand>
        <name>(E)-4-coumaroyl-AMP</name>
        <dbReference type="ChEBI" id="CHEBI:192348"/>
    </ligand>
</feature>
<feature type="binding site" evidence="1">
    <location>
        <position position="280"/>
    </location>
    <ligand>
        <name>CoA</name>
        <dbReference type="ChEBI" id="CHEBI:57287"/>
    </ligand>
</feature>
<feature type="binding site" evidence="1">
    <location>
        <position position="329"/>
    </location>
    <ligand>
        <name>(E)-4-coumaroyl-AMP</name>
        <dbReference type="ChEBI" id="CHEBI:192348"/>
    </ligand>
</feature>
<feature type="binding site" evidence="1">
    <location>
        <position position="351"/>
    </location>
    <ligand>
        <name>(E)-4-coumaroyl-AMP</name>
        <dbReference type="ChEBI" id="CHEBI:192348"/>
    </ligand>
</feature>
<feature type="binding site" evidence="1">
    <location>
        <position position="351"/>
    </location>
    <ligand>
        <name>ATP</name>
        <dbReference type="ChEBI" id="CHEBI:30616"/>
    </ligand>
</feature>
<feature type="binding site" evidence="1">
    <location>
        <position position="352"/>
    </location>
    <ligand>
        <name>(E)-4-coumaroyl-AMP</name>
        <dbReference type="ChEBI" id="CHEBI:192348"/>
    </ligand>
</feature>
<feature type="binding site" evidence="1">
    <location>
        <position position="352"/>
    </location>
    <ligand>
        <name>ATP</name>
        <dbReference type="ChEBI" id="CHEBI:30616"/>
    </ligand>
</feature>
<feature type="binding site" evidence="1">
    <location>
        <position position="356"/>
    </location>
    <ligand>
        <name>(E)-4-coumaroyl-AMP</name>
        <dbReference type="ChEBI" id="CHEBI:192348"/>
    </ligand>
</feature>
<feature type="binding site" evidence="1">
    <location>
        <position position="356"/>
    </location>
    <ligand>
        <name>ATP</name>
        <dbReference type="ChEBI" id="CHEBI:30616"/>
    </ligand>
</feature>
<feature type="binding site" evidence="1">
    <location>
        <position position="364"/>
    </location>
    <ligand>
        <name>(E)-4-coumaroyl-AMP</name>
        <dbReference type="ChEBI" id="CHEBI:192348"/>
    </ligand>
</feature>
<feature type="binding site" evidence="1">
    <location>
        <position position="440"/>
    </location>
    <ligand>
        <name>ATP</name>
        <dbReference type="ChEBI" id="CHEBI:30616"/>
    </ligand>
</feature>
<feature type="binding site" evidence="1">
    <location>
        <position position="455"/>
    </location>
    <ligand>
        <name>ATP</name>
        <dbReference type="ChEBI" id="CHEBI:30616"/>
    </ligand>
</feature>
<feature type="binding site" evidence="1">
    <location>
        <position position="457"/>
    </location>
    <ligand>
        <name>(E)-4-coumaroyl-AMP</name>
        <dbReference type="ChEBI" id="CHEBI:192348"/>
    </ligand>
</feature>
<feature type="binding site" evidence="1">
    <location>
        <position position="461"/>
    </location>
    <ligand>
        <name>(E)-4-coumaroyl-AMP</name>
        <dbReference type="ChEBI" id="CHEBI:192348"/>
    </ligand>
</feature>
<feature type="binding site" evidence="1">
    <location>
        <position position="463"/>
    </location>
    <ligand>
        <name>CoA</name>
        <dbReference type="ChEBI" id="CHEBI:57287"/>
    </ligand>
</feature>
<feature type="binding site" evidence="1">
    <location>
        <position position="464"/>
    </location>
    <ligand>
        <name>CoA</name>
        <dbReference type="ChEBI" id="CHEBI:57287"/>
    </ligand>
</feature>
<feature type="binding site" evidence="1">
    <location>
        <position position="547"/>
    </location>
    <ligand>
        <name>ATP</name>
        <dbReference type="ChEBI" id="CHEBI:30616"/>
    </ligand>
</feature>
<feature type="sequence conflict" description="In Ref. 1; CAA36850." evidence="6" ref="1">
    <original>P</original>
    <variation>R</variation>
    <location>
        <position position="405"/>
    </location>
</feature>
<feature type="sequence conflict" description="In Ref. 1; CAA36850." evidence="6" ref="1">
    <original>I</original>
    <variation>N</variation>
    <location>
        <position position="477"/>
    </location>
</feature>
<sequence length="564" mass="60902">MGSMEQQQPESAAPATEASPEIIFRSKLQDIAITNTLPLHRYCFERLPEVAARPCLIDGATGGVLTYADVDRLSRRLAAALRRAPLGLRRGGVVMSLLRNSPEFVLSFFAASRVGAAVTTANPMSTPHEIESQLAAAGATVVITESMAADKLPSHSHGALTVVLIDERRDGCLHFWDDLMSEDEASPLAGDEDDEKVFDPDDVVALPYSSGTTGLPKGVMLTHRSLSTSVAQQVDGENPNIGLHAGDVILCALPMFHIYSLNTIMMCGLRVGAAIVVMRRFDLAAMMDLVERHRVTIAPLVPPIVVAVAKSEAAAARDLSSVRMVLSGAAPMGKDIEDAFMAKLPGAVLGQGYGMTEAGPVLSMCLAFAKEPFKVKSGACGTVVRNAELKIIDPDTGKSLGRNLPGEICIRGQQIMKGYLNNPEATKNTIDAEGWLHTGDIGYVDDDDEIFIVDRLKEIIKYRGFQVAPAELEALLITHPSIADAAVVGKQIEPEIGEIPVAFVAKTEGSELSEDDVKQFVAKEVIYYKKIREVFFVDKIPKAPSGKILRKELRKQLQHLQQEA</sequence>